<protein>
    <recommendedName>
        <fullName>Tyrosine-protein kinase Fer</fullName>
        <ecNumber>2.7.10.2</ecNumber>
    </recommendedName>
    <alternativeName>
        <fullName>Proto-oncogene c-Fer</fullName>
    </alternativeName>
    <alternativeName>
        <fullName>Tyrosine-protein kinase FLK</fullName>
    </alternativeName>
    <alternativeName>
        <fullName>p94-Fer</fullName>
    </alternativeName>
</protein>
<accession>P09760</accession>
<accession>F1MA12</accession>
<evidence type="ECO:0000250" key="1"/>
<evidence type="ECO:0000250" key="2">
    <source>
        <dbReference type="UniProtKB" id="P16591"/>
    </source>
</evidence>
<evidence type="ECO:0000250" key="3">
    <source>
        <dbReference type="UniProtKB" id="P70451"/>
    </source>
</evidence>
<evidence type="ECO:0000255" key="4"/>
<evidence type="ECO:0000255" key="5">
    <source>
        <dbReference type="PROSITE-ProRule" id="PRU00159"/>
    </source>
</evidence>
<evidence type="ECO:0000255" key="6">
    <source>
        <dbReference type="PROSITE-ProRule" id="PRU00191"/>
    </source>
</evidence>
<evidence type="ECO:0000255" key="7">
    <source>
        <dbReference type="PROSITE-ProRule" id="PRU01077"/>
    </source>
</evidence>
<evidence type="ECO:0000255" key="8">
    <source>
        <dbReference type="PROSITE-ProRule" id="PRU10028"/>
    </source>
</evidence>
<evidence type="ECO:0000269" key="9">
    <source>
    </source>
</evidence>
<evidence type="ECO:0000269" key="10">
    <source>
    </source>
</evidence>
<evidence type="ECO:0000305" key="11"/>
<dbReference type="EC" id="2.7.10.2"/>
<dbReference type="EMBL" id="X13412">
    <property type="protein sequence ID" value="CAA31778.1"/>
    <property type="molecule type" value="mRNA"/>
</dbReference>
<dbReference type="PIR" id="S04328">
    <property type="entry name" value="S04328"/>
</dbReference>
<dbReference type="RefSeq" id="NP_001382687.1">
    <property type="nucleotide sequence ID" value="NM_001395758.1"/>
</dbReference>
<dbReference type="RefSeq" id="XP_008765589.1">
    <property type="nucleotide sequence ID" value="XM_008767367.4"/>
</dbReference>
<dbReference type="RefSeq" id="XP_008765592.1">
    <property type="nucleotide sequence ID" value="XM_008767370.2"/>
</dbReference>
<dbReference type="SMR" id="P09760"/>
<dbReference type="FunCoup" id="P09760">
    <property type="interactions" value="3348"/>
</dbReference>
<dbReference type="IntAct" id="P09760">
    <property type="interactions" value="3"/>
</dbReference>
<dbReference type="STRING" id="10116.ENSRNOP00000021758"/>
<dbReference type="ChEMBL" id="CHEMBL4523172"/>
<dbReference type="iPTMnet" id="P09760"/>
<dbReference type="PhosphoSitePlus" id="P09760"/>
<dbReference type="PaxDb" id="10116-ENSRNOP00000021758"/>
<dbReference type="Ensembl" id="ENSRNOT00000097737.1">
    <property type="protein sequence ID" value="ENSRNOP00000090379.1"/>
    <property type="gene ID" value="ENSRNOG00000015898.9"/>
</dbReference>
<dbReference type="GeneID" id="301737"/>
<dbReference type="AGR" id="RGD:1306273"/>
<dbReference type="CTD" id="2241"/>
<dbReference type="RGD" id="1306273">
    <property type="gene designation" value="Fer"/>
</dbReference>
<dbReference type="eggNOG" id="KOG0194">
    <property type="taxonomic scope" value="Eukaryota"/>
</dbReference>
<dbReference type="GeneTree" id="ENSGT00940000154997"/>
<dbReference type="HOGENOM" id="CLU_005265_0_0_1"/>
<dbReference type="InParanoid" id="P09760"/>
<dbReference type="OMA" id="QEHYHES"/>
<dbReference type="OrthoDB" id="546826at2759"/>
<dbReference type="TreeFam" id="TF315363"/>
<dbReference type="Reactome" id="R-RNO-1433557">
    <property type="pathway name" value="Signaling by SCF-KIT"/>
</dbReference>
<dbReference type="PRO" id="PR:P09760"/>
<dbReference type="Proteomes" id="UP000002494">
    <property type="component" value="Chromosome 9"/>
</dbReference>
<dbReference type="GO" id="GO:0015629">
    <property type="term" value="C:actin cytoskeleton"/>
    <property type="evidence" value="ECO:0000266"/>
    <property type="project" value="RGD"/>
</dbReference>
<dbReference type="GO" id="GO:0005912">
    <property type="term" value="C:adherens junction"/>
    <property type="evidence" value="ECO:0000314"/>
    <property type="project" value="RGD"/>
</dbReference>
<dbReference type="GO" id="GO:0005938">
    <property type="term" value="C:cell cortex"/>
    <property type="evidence" value="ECO:0007669"/>
    <property type="project" value="UniProtKB-SubCell"/>
</dbReference>
<dbReference type="GO" id="GO:0030054">
    <property type="term" value="C:cell junction"/>
    <property type="evidence" value="ECO:0000266"/>
    <property type="project" value="RGD"/>
</dbReference>
<dbReference type="GO" id="GO:0000785">
    <property type="term" value="C:chromatin"/>
    <property type="evidence" value="ECO:0000250"/>
    <property type="project" value="UniProtKB"/>
</dbReference>
<dbReference type="GO" id="GO:0005737">
    <property type="term" value="C:cytoplasm"/>
    <property type="evidence" value="ECO:0000250"/>
    <property type="project" value="UniProtKB"/>
</dbReference>
<dbReference type="GO" id="GO:0009898">
    <property type="term" value="C:cytoplasmic side of plasma membrane"/>
    <property type="evidence" value="ECO:0000250"/>
    <property type="project" value="UniProtKB"/>
</dbReference>
<dbReference type="GO" id="GO:0005829">
    <property type="term" value="C:cytosol"/>
    <property type="evidence" value="ECO:0007669"/>
    <property type="project" value="Ensembl"/>
</dbReference>
<dbReference type="GO" id="GO:0030027">
    <property type="term" value="C:lamellipodium"/>
    <property type="evidence" value="ECO:0000266"/>
    <property type="project" value="RGD"/>
</dbReference>
<dbReference type="GO" id="GO:0015630">
    <property type="term" value="C:microtubule cytoskeleton"/>
    <property type="evidence" value="ECO:0000266"/>
    <property type="project" value="RGD"/>
</dbReference>
<dbReference type="GO" id="GO:0005634">
    <property type="term" value="C:nucleus"/>
    <property type="evidence" value="ECO:0000266"/>
    <property type="project" value="RGD"/>
</dbReference>
<dbReference type="GO" id="GO:0005886">
    <property type="term" value="C:plasma membrane"/>
    <property type="evidence" value="ECO:0000318"/>
    <property type="project" value="GO_Central"/>
</dbReference>
<dbReference type="GO" id="GO:0032991">
    <property type="term" value="C:protein-containing complex"/>
    <property type="evidence" value="ECO:0000314"/>
    <property type="project" value="RGD"/>
</dbReference>
<dbReference type="GO" id="GO:0005524">
    <property type="term" value="F:ATP binding"/>
    <property type="evidence" value="ECO:0007669"/>
    <property type="project" value="UniProtKB-KW"/>
</dbReference>
<dbReference type="GO" id="GO:0005154">
    <property type="term" value="F:epidermal growth factor receptor binding"/>
    <property type="evidence" value="ECO:0000250"/>
    <property type="project" value="UniProtKB"/>
</dbReference>
<dbReference type="GO" id="GO:0008289">
    <property type="term" value="F:lipid binding"/>
    <property type="evidence" value="ECO:0000250"/>
    <property type="project" value="UniProtKB"/>
</dbReference>
<dbReference type="GO" id="GO:0004715">
    <property type="term" value="F:non-membrane spanning protein tyrosine kinase activity"/>
    <property type="evidence" value="ECO:0000250"/>
    <property type="project" value="UniProtKB"/>
</dbReference>
<dbReference type="GO" id="GO:0004672">
    <property type="term" value="F:protein kinase activity"/>
    <property type="evidence" value="ECO:0000266"/>
    <property type="project" value="RGD"/>
</dbReference>
<dbReference type="GO" id="GO:0008157">
    <property type="term" value="F:protein phosphatase 1 binding"/>
    <property type="evidence" value="ECO:0000266"/>
    <property type="project" value="RGD"/>
</dbReference>
<dbReference type="GO" id="GO:0004713">
    <property type="term" value="F:protein tyrosine kinase activity"/>
    <property type="evidence" value="ECO:0000318"/>
    <property type="project" value="GO_Central"/>
</dbReference>
<dbReference type="GO" id="GO:0030036">
    <property type="term" value="P:actin cytoskeleton organization"/>
    <property type="evidence" value="ECO:0000250"/>
    <property type="project" value="UniProtKB"/>
</dbReference>
<dbReference type="GO" id="GO:0034333">
    <property type="term" value="P:adherens junction assembly"/>
    <property type="evidence" value="ECO:0000270"/>
    <property type="project" value="RGD"/>
</dbReference>
<dbReference type="GO" id="GO:0120179">
    <property type="term" value="P:adherens junction disassembly"/>
    <property type="evidence" value="ECO:0000270"/>
    <property type="project" value="RGD"/>
</dbReference>
<dbReference type="GO" id="GO:0007155">
    <property type="term" value="P:cell adhesion"/>
    <property type="evidence" value="ECO:0000266"/>
    <property type="project" value="RGD"/>
</dbReference>
<dbReference type="GO" id="GO:0044331">
    <property type="term" value="P:cell-cell adhesion mediated by cadherin"/>
    <property type="evidence" value="ECO:0000250"/>
    <property type="project" value="UniProtKB"/>
</dbReference>
<dbReference type="GO" id="GO:0036006">
    <property type="term" value="P:cellular response to macrophage colony-stimulating factor stimulus"/>
    <property type="evidence" value="ECO:0000266"/>
    <property type="project" value="RGD"/>
</dbReference>
<dbReference type="GO" id="GO:0034614">
    <property type="term" value="P:cellular response to reactive oxygen species"/>
    <property type="evidence" value="ECO:0000250"/>
    <property type="project" value="UniProtKB"/>
</dbReference>
<dbReference type="GO" id="GO:0006935">
    <property type="term" value="P:chemotaxis"/>
    <property type="evidence" value="ECO:0000266"/>
    <property type="project" value="RGD"/>
</dbReference>
<dbReference type="GO" id="GO:0019221">
    <property type="term" value="P:cytokine-mediated signaling pathway"/>
    <property type="evidence" value="ECO:0000250"/>
    <property type="project" value="UniProtKB"/>
</dbReference>
<dbReference type="GO" id="GO:0050904">
    <property type="term" value="P:diapedesis"/>
    <property type="evidence" value="ECO:0000250"/>
    <property type="project" value="UniProtKB"/>
</dbReference>
<dbReference type="GO" id="GO:0035426">
    <property type="term" value="P:extracellular matrix-cell signaling"/>
    <property type="evidence" value="ECO:0000250"/>
    <property type="project" value="UniProtKB"/>
</dbReference>
<dbReference type="GO" id="GO:0038095">
    <property type="term" value="P:Fc-epsilon receptor signaling pathway"/>
    <property type="evidence" value="ECO:0000250"/>
    <property type="project" value="UniProtKB"/>
</dbReference>
<dbReference type="GO" id="GO:0007281">
    <property type="term" value="P:germ cell development"/>
    <property type="evidence" value="ECO:0000270"/>
    <property type="project" value="RGD"/>
</dbReference>
<dbReference type="GO" id="GO:0008286">
    <property type="term" value="P:insulin receptor signaling pathway"/>
    <property type="evidence" value="ECO:0000250"/>
    <property type="project" value="UniProtKB"/>
</dbReference>
<dbReference type="GO" id="GO:0070102">
    <property type="term" value="P:interleukin-6-mediated signaling pathway"/>
    <property type="evidence" value="ECO:0000266"/>
    <property type="project" value="RGD"/>
</dbReference>
<dbReference type="GO" id="GO:0038109">
    <property type="term" value="P:Kit signaling pathway"/>
    <property type="evidence" value="ECO:0000250"/>
    <property type="project" value="UniProtKB"/>
</dbReference>
<dbReference type="GO" id="GO:0008584">
    <property type="term" value="P:male gonad development"/>
    <property type="evidence" value="ECO:0000270"/>
    <property type="project" value="RGD"/>
</dbReference>
<dbReference type="GO" id="GO:0000226">
    <property type="term" value="P:microtubule cytoskeleton organization"/>
    <property type="evidence" value="ECO:0000250"/>
    <property type="project" value="UniProtKB"/>
</dbReference>
<dbReference type="GO" id="GO:0033007">
    <property type="term" value="P:negative regulation of mast cell activation involved in immune response"/>
    <property type="evidence" value="ECO:0000250"/>
    <property type="project" value="UniProtKB"/>
</dbReference>
<dbReference type="GO" id="GO:0018108">
    <property type="term" value="P:peptidyl-tyrosine phosphorylation"/>
    <property type="evidence" value="ECO:0000250"/>
    <property type="project" value="UniProtKB"/>
</dbReference>
<dbReference type="GO" id="GO:0048008">
    <property type="term" value="P:platelet-derived growth factor receptor signaling pathway"/>
    <property type="evidence" value="ECO:0000250"/>
    <property type="project" value="UniProtKB"/>
</dbReference>
<dbReference type="GO" id="GO:0030838">
    <property type="term" value="P:positive regulation of actin filament polymerization"/>
    <property type="evidence" value="ECO:0000250"/>
    <property type="project" value="UniProtKB"/>
</dbReference>
<dbReference type="GO" id="GO:0030335">
    <property type="term" value="P:positive regulation of cell migration"/>
    <property type="evidence" value="ECO:0000250"/>
    <property type="project" value="UniProtKB"/>
</dbReference>
<dbReference type="GO" id="GO:0008284">
    <property type="term" value="P:positive regulation of cell population proliferation"/>
    <property type="evidence" value="ECO:0000266"/>
    <property type="project" value="RGD"/>
</dbReference>
<dbReference type="GO" id="GO:0051092">
    <property type="term" value="P:positive regulation of NF-kappaB transcription factor activity"/>
    <property type="evidence" value="ECO:0000250"/>
    <property type="project" value="UniProtKB"/>
</dbReference>
<dbReference type="GO" id="GO:0051897">
    <property type="term" value="P:positive regulation of phosphatidylinositol 3-kinase/protein kinase B signal transduction"/>
    <property type="evidence" value="ECO:0000266"/>
    <property type="project" value="RGD"/>
</dbReference>
<dbReference type="GO" id="GO:0042058">
    <property type="term" value="P:regulation of epidermal growth factor receptor signaling pathway"/>
    <property type="evidence" value="ECO:0000250"/>
    <property type="project" value="UniProtKB"/>
</dbReference>
<dbReference type="GO" id="GO:0010762">
    <property type="term" value="P:regulation of fibroblast migration"/>
    <property type="evidence" value="ECO:0000266"/>
    <property type="project" value="RGD"/>
</dbReference>
<dbReference type="GO" id="GO:0010591">
    <property type="term" value="P:regulation of lamellipodium assembly"/>
    <property type="evidence" value="ECO:0000250"/>
    <property type="project" value="UniProtKB"/>
</dbReference>
<dbReference type="GO" id="GO:0001932">
    <property type="term" value="P:regulation of protein phosphorylation"/>
    <property type="evidence" value="ECO:0000250"/>
    <property type="project" value="UniProtKB"/>
</dbReference>
<dbReference type="GO" id="GO:0032496">
    <property type="term" value="P:response to lipopolysaccharide"/>
    <property type="evidence" value="ECO:0000250"/>
    <property type="project" value="UniProtKB"/>
</dbReference>
<dbReference type="GO" id="GO:0036119">
    <property type="term" value="P:response to platelet-derived growth factor"/>
    <property type="evidence" value="ECO:0000250"/>
    <property type="project" value="UniProtKB"/>
</dbReference>
<dbReference type="GO" id="GO:0072520">
    <property type="term" value="P:seminiferous tubule development"/>
    <property type="evidence" value="ECO:0000270"/>
    <property type="project" value="RGD"/>
</dbReference>
<dbReference type="GO" id="GO:0060009">
    <property type="term" value="P:Sertoli cell development"/>
    <property type="evidence" value="ECO:0000270"/>
    <property type="project" value="RGD"/>
</dbReference>
<dbReference type="GO" id="GO:0007165">
    <property type="term" value="P:signal transduction"/>
    <property type="evidence" value="ECO:0000266"/>
    <property type="project" value="RGD"/>
</dbReference>
<dbReference type="GO" id="GO:0034446">
    <property type="term" value="P:substrate adhesion-dependent cell spreading"/>
    <property type="evidence" value="ECO:0000250"/>
    <property type="project" value="UniProtKB"/>
</dbReference>
<dbReference type="CDD" id="cd07686">
    <property type="entry name" value="F-BAR_Fer"/>
    <property type="match status" value="1"/>
</dbReference>
<dbReference type="CDD" id="cd10361">
    <property type="entry name" value="SH2_Fps_family"/>
    <property type="match status" value="1"/>
</dbReference>
<dbReference type="FunFam" id="1.10.287.160:FF:000005">
    <property type="entry name" value="Tyrosine-protein kinase"/>
    <property type="match status" value="1"/>
</dbReference>
<dbReference type="FunFam" id="1.10.510.10:FF:000622">
    <property type="entry name" value="Tyrosine-protein kinase"/>
    <property type="match status" value="1"/>
</dbReference>
<dbReference type="FunFam" id="1.20.1270.60:FF:000029">
    <property type="entry name" value="Tyrosine-protein kinase"/>
    <property type="match status" value="1"/>
</dbReference>
<dbReference type="FunFam" id="3.30.200.20:FF:000089">
    <property type="entry name" value="Tyrosine-protein kinase"/>
    <property type="match status" value="1"/>
</dbReference>
<dbReference type="FunFam" id="3.30.505.10:FF:000020">
    <property type="entry name" value="Tyrosine-protein kinase"/>
    <property type="match status" value="1"/>
</dbReference>
<dbReference type="Gene3D" id="1.20.1270.60">
    <property type="entry name" value="Arfaptin homology (AH) domain/BAR domain"/>
    <property type="match status" value="1"/>
</dbReference>
<dbReference type="Gene3D" id="1.10.287.160">
    <property type="entry name" value="HR1 repeat"/>
    <property type="match status" value="1"/>
</dbReference>
<dbReference type="Gene3D" id="3.30.200.20">
    <property type="entry name" value="Phosphorylase Kinase, domain 1"/>
    <property type="match status" value="1"/>
</dbReference>
<dbReference type="Gene3D" id="3.30.505.10">
    <property type="entry name" value="SH2 domain"/>
    <property type="match status" value="1"/>
</dbReference>
<dbReference type="Gene3D" id="1.10.510.10">
    <property type="entry name" value="Transferase(Phosphotransferase) domain 1"/>
    <property type="match status" value="1"/>
</dbReference>
<dbReference type="InterPro" id="IPR027267">
    <property type="entry name" value="AH/BAR_dom_sf"/>
</dbReference>
<dbReference type="InterPro" id="IPR031160">
    <property type="entry name" value="F_BAR"/>
</dbReference>
<dbReference type="InterPro" id="IPR001060">
    <property type="entry name" value="FCH_dom"/>
</dbReference>
<dbReference type="InterPro" id="IPR037452">
    <property type="entry name" value="Fer_F-BAR"/>
</dbReference>
<dbReference type="InterPro" id="IPR035849">
    <property type="entry name" value="Fes/Fps/Fer_SH2"/>
</dbReference>
<dbReference type="InterPro" id="IPR011009">
    <property type="entry name" value="Kinase-like_dom_sf"/>
</dbReference>
<dbReference type="InterPro" id="IPR050198">
    <property type="entry name" value="Non-receptor_tyrosine_kinases"/>
</dbReference>
<dbReference type="InterPro" id="IPR000719">
    <property type="entry name" value="Prot_kinase_dom"/>
</dbReference>
<dbReference type="InterPro" id="IPR017441">
    <property type="entry name" value="Protein_kinase_ATP_BS"/>
</dbReference>
<dbReference type="InterPro" id="IPR001245">
    <property type="entry name" value="Ser-Thr/Tyr_kinase_cat_dom"/>
</dbReference>
<dbReference type="InterPro" id="IPR000980">
    <property type="entry name" value="SH2"/>
</dbReference>
<dbReference type="InterPro" id="IPR036860">
    <property type="entry name" value="SH2_dom_sf"/>
</dbReference>
<dbReference type="InterPro" id="IPR016250">
    <property type="entry name" value="Tyr-prot_kinase_Fes/Fps"/>
</dbReference>
<dbReference type="InterPro" id="IPR008266">
    <property type="entry name" value="Tyr_kinase_AS"/>
</dbReference>
<dbReference type="InterPro" id="IPR020635">
    <property type="entry name" value="Tyr_kinase_cat_dom"/>
</dbReference>
<dbReference type="PANTHER" id="PTHR24418">
    <property type="entry name" value="TYROSINE-PROTEIN KINASE"/>
    <property type="match status" value="1"/>
</dbReference>
<dbReference type="Pfam" id="PF00611">
    <property type="entry name" value="FCH"/>
    <property type="match status" value="1"/>
</dbReference>
<dbReference type="Pfam" id="PF07714">
    <property type="entry name" value="PK_Tyr_Ser-Thr"/>
    <property type="match status" value="1"/>
</dbReference>
<dbReference type="Pfam" id="PF00017">
    <property type="entry name" value="SH2"/>
    <property type="match status" value="1"/>
</dbReference>
<dbReference type="PIRSF" id="PIRSF000632">
    <property type="entry name" value="TyrPK_fps"/>
    <property type="match status" value="1"/>
</dbReference>
<dbReference type="PRINTS" id="PR00401">
    <property type="entry name" value="SH2DOMAIN"/>
</dbReference>
<dbReference type="PRINTS" id="PR00109">
    <property type="entry name" value="TYRKINASE"/>
</dbReference>
<dbReference type="SMART" id="SM00055">
    <property type="entry name" value="FCH"/>
    <property type="match status" value="1"/>
</dbReference>
<dbReference type="SMART" id="SM00252">
    <property type="entry name" value="SH2"/>
    <property type="match status" value="1"/>
</dbReference>
<dbReference type="SMART" id="SM00219">
    <property type="entry name" value="TyrKc"/>
    <property type="match status" value="1"/>
</dbReference>
<dbReference type="SUPFAM" id="SSF103657">
    <property type="entry name" value="BAR/IMD domain-like"/>
    <property type="match status" value="1"/>
</dbReference>
<dbReference type="SUPFAM" id="SSF56112">
    <property type="entry name" value="Protein kinase-like (PK-like)"/>
    <property type="match status" value="1"/>
</dbReference>
<dbReference type="SUPFAM" id="SSF55550">
    <property type="entry name" value="SH2 domain"/>
    <property type="match status" value="1"/>
</dbReference>
<dbReference type="PROSITE" id="PS51741">
    <property type="entry name" value="F_BAR"/>
    <property type="match status" value="1"/>
</dbReference>
<dbReference type="PROSITE" id="PS00107">
    <property type="entry name" value="PROTEIN_KINASE_ATP"/>
    <property type="match status" value="1"/>
</dbReference>
<dbReference type="PROSITE" id="PS50011">
    <property type="entry name" value="PROTEIN_KINASE_DOM"/>
    <property type="match status" value="1"/>
</dbReference>
<dbReference type="PROSITE" id="PS00109">
    <property type="entry name" value="PROTEIN_KINASE_TYR"/>
    <property type="match status" value="1"/>
</dbReference>
<dbReference type="PROSITE" id="PS50001">
    <property type="entry name" value="SH2"/>
    <property type="match status" value="1"/>
</dbReference>
<name>FER_RAT</name>
<feature type="chain" id="PRO_0000088093" description="Tyrosine-protein kinase Fer">
    <location>
        <begin position="1"/>
        <end position="823"/>
    </location>
</feature>
<feature type="domain" description="F-BAR" evidence="7">
    <location>
        <begin position="1"/>
        <end position="259"/>
    </location>
</feature>
<feature type="domain" description="SH2" evidence="6">
    <location>
        <begin position="461"/>
        <end position="551"/>
    </location>
</feature>
<feature type="domain" description="Protein kinase" evidence="5">
    <location>
        <begin position="564"/>
        <end position="815"/>
    </location>
</feature>
<feature type="region of interest" description="Important for interaction with membranes containing phosphoinositides" evidence="1">
    <location>
        <begin position="1"/>
        <end position="300"/>
    </location>
</feature>
<feature type="coiled-coil region" evidence="4">
    <location>
        <begin position="123"/>
        <end position="185"/>
    </location>
</feature>
<feature type="coiled-coil region" evidence="4">
    <location>
        <begin position="301"/>
        <end position="382"/>
    </location>
</feature>
<feature type="active site" description="Proton acceptor" evidence="5 8">
    <location>
        <position position="685"/>
    </location>
</feature>
<feature type="binding site" evidence="5">
    <location>
        <begin position="570"/>
        <end position="578"/>
    </location>
    <ligand>
        <name>ATP</name>
        <dbReference type="ChEBI" id="CHEBI:30616"/>
    </ligand>
</feature>
<feature type="binding site" evidence="5">
    <location>
        <position position="592"/>
    </location>
    <ligand>
        <name>ATP</name>
        <dbReference type="ChEBI" id="CHEBI:30616"/>
    </ligand>
</feature>
<feature type="modified residue" description="Phosphotyrosine" evidence="2">
    <location>
        <position position="402"/>
    </location>
</feature>
<feature type="modified residue" description="Phosphoserine" evidence="2">
    <location>
        <position position="434"/>
    </location>
</feature>
<feature type="modified residue" description="Phosphotyrosine; by autocatalysis" evidence="3">
    <location>
        <position position="616"/>
    </location>
</feature>
<feature type="modified residue" description="Phosphotyrosine; by autocatalysis" evidence="3">
    <location>
        <position position="715"/>
    </location>
</feature>
<feature type="sequence conflict" description="In Ref. 2; CAA31778." evidence="11" ref="2">
    <original>G</original>
    <variation>R</variation>
    <location>
        <position position="501"/>
    </location>
</feature>
<gene>
    <name type="primary">Fer</name>
    <name type="synonym">Fert2</name>
    <name type="synonym">Flk</name>
</gene>
<comment type="function">
    <text evidence="1 9">Tyrosine-protein kinase that acts downstream of cell surface receptors for growth factors and plays a role in the regulation of the actin cytoskeleton, microtubule assembly, lamellipodia formation, cell adhesion, cell migration and chemotaxis. Acts downstream of EGFR, KIT, PDGFRA and PDGFRB. Acts downstream of EGFR to promote activation of NF-kappa-B and cell proliferation. May play a role in the regulation of the mitotic cell cycle. Plays a role in the insulin receptor signaling pathway and in activation of phosphatidylinositol 3-kinase. Acts downstream of the activated FCER1 receptor and plays a role in FCER1 (high affinity immunoglobulin epsilon receptor)-mediated signaling in mast cells. Plays a role in the regulation of mast cell degranulation. Plays a role in leukocyte recruitment and diapedesis in response to bacterial lipopolysaccharide (LPS). Plays a role in neuronal cell death after brain damage. Phosphorylates CTTN, CTNND1, PTK2/FAK1, GAB1, PECAM1 and PTPN11. May phosphorylate JUP and PTPN1. Can phosphorylate STAT3, but the biological relevance of this clearly depends on cell type and stimulus (By similarity). Plays a role in synapse organization, trafficking of synaptic vesicles, the generation of excitatory postsynaptic currents and neuron-neuron synaptic transmission.</text>
</comment>
<comment type="catalytic activity">
    <reaction evidence="8">
        <text>L-tyrosyl-[protein] + ATP = O-phospho-L-tyrosyl-[protein] + ADP + H(+)</text>
        <dbReference type="Rhea" id="RHEA:10596"/>
        <dbReference type="Rhea" id="RHEA-COMP:10136"/>
        <dbReference type="Rhea" id="RHEA-COMP:20101"/>
        <dbReference type="ChEBI" id="CHEBI:15378"/>
        <dbReference type="ChEBI" id="CHEBI:30616"/>
        <dbReference type="ChEBI" id="CHEBI:46858"/>
        <dbReference type="ChEBI" id="CHEBI:61978"/>
        <dbReference type="ChEBI" id="CHEBI:456216"/>
        <dbReference type="EC" id="2.7.10.2"/>
    </reaction>
</comment>
<comment type="subunit">
    <text evidence="1 10">Homotrimer. Interacts with IRS1, JAK1, NRP1, PIK3R1, PLEC and TMF1. Interacts with PPP1CA and regulates its phosphorylation at 'Thr-320'. Interacts with CTNND1, EGFR, FLT3, PECAM1, PDGFR and STAT3. Interacts (via SH2 domain) with CTTN. Interacts with HSP90; this stabilizes phosphorylated FER and protects FER against proteasomal degradation. Component of a complex that contains at least FER, CTTN and PTK2/FAK1 (By similarity). Interacts with ARHGDIA.</text>
</comment>
<comment type="subcellular location">
    <subcellularLocation>
        <location evidence="1">Cytoplasm</location>
    </subcellularLocation>
    <subcellularLocation>
        <location evidence="1">Cytoplasm</location>
        <location evidence="1">Cytoskeleton</location>
    </subcellularLocation>
    <subcellularLocation>
        <location evidence="1">Cell membrane</location>
        <topology evidence="1">Peripheral membrane protein</topology>
        <orientation evidence="1">Cytoplasmic side</orientation>
    </subcellularLocation>
    <subcellularLocation>
        <location evidence="1">Cell projection</location>
    </subcellularLocation>
    <subcellularLocation>
        <location evidence="1">Cell junction</location>
    </subcellularLocation>
    <subcellularLocation>
        <location evidence="1">Membrane</location>
        <topology evidence="1">Peripheral membrane protein</topology>
        <orientation evidence="1">Cytoplasmic side</orientation>
    </subcellularLocation>
    <subcellularLocation>
        <location evidence="1">Nucleus</location>
    </subcellularLocation>
    <subcellularLocation>
        <location evidence="1">Cytoplasm</location>
        <location evidence="1">Cell cortex</location>
    </subcellularLocation>
    <text evidence="1">Associated with the chromatin. Detected on microtubules in polarized and motile vascular endothelial cells. Colocalizes with F-actin at the cell cortex. Colocalizes with PECAM1 and CTNND1 at nascent cell-cell contacts (By similarity).</text>
</comment>
<comment type="domain">
    <text evidence="1">The coiled coil domains mediate homooligomerization and are required for location at microtubules.</text>
</comment>
<comment type="domain">
    <text evidence="1">The N-terminal region including the first coiled coil domain mediates interaction with phosphoinositide-containing membranes.</text>
</comment>
<comment type="PTM">
    <text evidence="1">Autophosphorylated.</text>
</comment>
<comment type="PTM">
    <text evidence="1">Polyubiquitinated; this leads to proteasomal degradation.</text>
</comment>
<comment type="similarity">
    <text evidence="5">Belongs to the protein kinase superfamily. Tyr protein kinase family. Fes/fps subfamily.</text>
</comment>
<reference key="1">
    <citation type="journal article" date="2004" name="Nature">
        <title>Genome sequence of the Brown Norway rat yields insights into mammalian evolution.</title>
        <authorList>
            <person name="Gibbs R.A."/>
            <person name="Weinstock G.M."/>
            <person name="Metzker M.L."/>
            <person name="Muzny D.M."/>
            <person name="Sodergren E.J."/>
            <person name="Scherer S."/>
            <person name="Scott G."/>
            <person name="Steffen D."/>
            <person name="Worley K.C."/>
            <person name="Burch P.E."/>
            <person name="Okwuonu G."/>
            <person name="Hines S."/>
            <person name="Lewis L."/>
            <person name="Deramo C."/>
            <person name="Delgado O."/>
            <person name="Dugan-Rocha S."/>
            <person name="Miner G."/>
            <person name="Morgan M."/>
            <person name="Hawes A."/>
            <person name="Gill R."/>
            <person name="Holt R.A."/>
            <person name="Adams M.D."/>
            <person name="Amanatides P.G."/>
            <person name="Baden-Tillson H."/>
            <person name="Barnstead M."/>
            <person name="Chin S."/>
            <person name="Evans C.A."/>
            <person name="Ferriera S."/>
            <person name="Fosler C."/>
            <person name="Glodek A."/>
            <person name="Gu Z."/>
            <person name="Jennings D."/>
            <person name="Kraft C.L."/>
            <person name="Nguyen T."/>
            <person name="Pfannkoch C.M."/>
            <person name="Sitter C."/>
            <person name="Sutton G.G."/>
            <person name="Venter J.C."/>
            <person name="Woodage T."/>
            <person name="Smith D."/>
            <person name="Lee H.-M."/>
            <person name="Gustafson E."/>
            <person name="Cahill P."/>
            <person name="Kana A."/>
            <person name="Doucette-Stamm L."/>
            <person name="Weinstock K."/>
            <person name="Fechtel K."/>
            <person name="Weiss R.B."/>
            <person name="Dunn D.M."/>
            <person name="Green E.D."/>
            <person name="Blakesley R.W."/>
            <person name="Bouffard G.G."/>
            <person name="De Jong P.J."/>
            <person name="Osoegawa K."/>
            <person name="Zhu B."/>
            <person name="Marra M."/>
            <person name="Schein J."/>
            <person name="Bosdet I."/>
            <person name="Fjell C."/>
            <person name="Jones S."/>
            <person name="Krzywinski M."/>
            <person name="Mathewson C."/>
            <person name="Siddiqui A."/>
            <person name="Wye N."/>
            <person name="McPherson J."/>
            <person name="Zhao S."/>
            <person name="Fraser C.M."/>
            <person name="Shetty J."/>
            <person name="Shatsman S."/>
            <person name="Geer K."/>
            <person name="Chen Y."/>
            <person name="Abramzon S."/>
            <person name="Nierman W.C."/>
            <person name="Havlak P.H."/>
            <person name="Chen R."/>
            <person name="Durbin K.J."/>
            <person name="Egan A."/>
            <person name="Ren Y."/>
            <person name="Song X.-Z."/>
            <person name="Li B."/>
            <person name="Liu Y."/>
            <person name="Qin X."/>
            <person name="Cawley S."/>
            <person name="Cooney A.J."/>
            <person name="D'Souza L.M."/>
            <person name="Martin K."/>
            <person name="Wu J.Q."/>
            <person name="Gonzalez-Garay M.L."/>
            <person name="Jackson A.R."/>
            <person name="Kalafus K.J."/>
            <person name="McLeod M.P."/>
            <person name="Milosavljevic A."/>
            <person name="Virk D."/>
            <person name="Volkov A."/>
            <person name="Wheeler D.A."/>
            <person name="Zhang Z."/>
            <person name="Bailey J.A."/>
            <person name="Eichler E.E."/>
            <person name="Tuzun E."/>
            <person name="Birney E."/>
            <person name="Mongin E."/>
            <person name="Ureta-Vidal A."/>
            <person name="Woodwark C."/>
            <person name="Zdobnov E."/>
            <person name="Bork P."/>
            <person name="Suyama M."/>
            <person name="Torrents D."/>
            <person name="Alexandersson M."/>
            <person name="Trask B.J."/>
            <person name="Young J.M."/>
            <person name="Huang H."/>
            <person name="Wang H."/>
            <person name="Xing H."/>
            <person name="Daniels S."/>
            <person name="Gietzen D."/>
            <person name="Schmidt J."/>
            <person name="Stevens K."/>
            <person name="Vitt U."/>
            <person name="Wingrove J."/>
            <person name="Camara F."/>
            <person name="Mar Alba M."/>
            <person name="Abril J.F."/>
            <person name="Guigo R."/>
            <person name="Smit A."/>
            <person name="Dubchak I."/>
            <person name="Rubin E.M."/>
            <person name="Couronne O."/>
            <person name="Poliakov A."/>
            <person name="Huebner N."/>
            <person name="Ganten D."/>
            <person name="Goesele C."/>
            <person name="Hummel O."/>
            <person name="Kreitler T."/>
            <person name="Lee Y.-A."/>
            <person name="Monti J."/>
            <person name="Schulz H."/>
            <person name="Zimdahl H."/>
            <person name="Himmelbauer H."/>
            <person name="Lehrach H."/>
            <person name="Jacob H.J."/>
            <person name="Bromberg S."/>
            <person name="Gullings-Handley J."/>
            <person name="Jensen-Seaman M.I."/>
            <person name="Kwitek A.E."/>
            <person name="Lazar J."/>
            <person name="Pasko D."/>
            <person name="Tonellato P.J."/>
            <person name="Twigger S."/>
            <person name="Ponting C.P."/>
            <person name="Duarte J.M."/>
            <person name="Rice S."/>
            <person name="Goodstadt L."/>
            <person name="Beatson S.A."/>
            <person name="Emes R.D."/>
            <person name="Winter E.E."/>
            <person name="Webber C."/>
            <person name="Brandt P."/>
            <person name="Nyakatura G."/>
            <person name="Adetobi M."/>
            <person name="Chiaromonte F."/>
            <person name="Elnitski L."/>
            <person name="Eswara P."/>
            <person name="Hardison R.C."/>
            <person name="Hou M."/>
            <person name="Kolbe D."/>
            <person name="Makova K."/>
            <person name="Miller W."/>
            <person name="Nekrutenko A."/>
            <person name="Riemer C."/>
            <person name="Schwartz S."/>
            <person name="Taylor J."/>
            <person name="Yang S."/>
            <person name="Zhang Y."/>
            <person name="Lindpaintner K."/>
            <person name="Andrews T.D."/>
            <person name="Caccamo M."/>
            <person name="Clamp M."/>
            <person name="Clarke L."/>
            <person name="Curwen V."/>
            <person name="Durbin R.M."/>
            <person name="Eyras E."/>
            <person name="Searle S.M."/>
            <person name="Cooper G.M."/>
            <person name="Batzoglou S."/>
            <person name="Brudno M."/>
            <person name="Sidow A."/>
            <person name="Stone E.A."/>
            <person name="Payseur B.A."/>
            <person name="Bourque G."/>
            <person name="Lopez-Otin C."/>
            <person name="Puente X.S."/>
            <person name="Chakrabarti K."/>
            <person name="Chatterji S."/>
            <person name="Dewey C."/>
            <person name="Pachter L."/>
            <person name="Bray N."/>
            <person name="Yap V.B."/>
            <person name="Caspi A."/>
            <person name="Tesler G."/>
            <person name="Pevzner P.A."/>
            <person name="Haussler D."/>
            <person name="Roskin K.M."/>
            <person name="Baertsch R."/>
            <person name="Clawson H."/>
            <person name="Furey T.S."/>
            <person name="Hinrichs A.S."/>
            <person name="Karolchik D."/>
            <person name="Kent W.J."/>
            <person name="Rosenbloom K.R."/>
            <person name="Trumbower H."/>
            <person name="Weirauch M."/>
            <person name="Cooper D.N."/>
            <person name="Stenson P.D."/>
            <person name="Ma B."/>
            <person name="Brent M."/>
            <person name="Arumugam M."/>
            <person name="Shteynberg D."/>
            <person name="Copley R.R."/>
            <person name="Taylor M.S."/>
            <person name="Riethman H."/>
            <person name="Mudunuri U."/>
            <person name="Peterson J."/>
            <person name="Guyer M."/>
            <person name="Felsenfeld A."/>
            <person name="Old S."/>
            <person name="Mockrin S."/>
            <person name="Collins F.S."/>
        </authorList>
    </citation>
    <scope>NUCLEOTIDE SEQUENCE [LARGE SCALE GENOMIC DNA]</scope>
    <source>
        <strain>Brown Norway</strain>
    </source>
</reference>
<reference key="2">
    <citation type="journal article" date="1988" name="Oncogene">
        <title>Novel protein-tyrosine kinase cDNAs related to fps/fes and eph cloned using anti-phosphotyrosine antibody.</title>
        <authorList>
            <person name="Letwin K."/>
            <person name="Yee S.P."/>
            <person name="Pawson T."/>
        </authorList>
    </citation>
    <scope>NUCLEOTIDE SEQUENCE [MRNA] OF 501-823</scope>
    <source>
        <strain>Wistar</strain>
        <tissue>Brain</tissue>
    </source>
</reference>
<reference key="3">
    <citation type="journal article" date="2008" name="J. Cell Biol.">
        <title>Synapses are regulated by the cytoplasmic tyrosine kinase Fer in a pathway mediated by p120catenin, Fer, SHP-2, and beta-catenin.</title>
        <authorList>
            <person name="Lee S.H."/>
            <person name="Peng I.F."/>
            <person name="Ng Y.G."/>
            <person name="Yanagisawa M."/>
            <person name="Bamji S.X."/>
            <person name="Elia L.P."/>
            <person name="Balsamo J."/>
            <person name="Lilien J."/>
            <person name="Anastasiadis P.Z."/>
            <person name="Ullian E.M."/>
            <person name="Reichardt L.F."/>
        </authorList>
    </citation>
    <scope>FUNCTION IN SYNAPSE ORGANIZATION AND SYNAPTIC TRANSMISSION</scope>
</reference>
<reference key="4">
    <citation type="journal article" date="2010" name="BMC Biochem.">
        <title>The Fer tyrosine kinase regulates interactions of Rho GDP-Dissociation Inhibitor alpha with the small GTPase Rac.</title>
        <authorList>
            <person name="Fei F."/>
            <person name="Kweon S.M."/>
            <person name="Haataja L."/>
            <person name="De Sepulveda P."/>
            <person name="Groffen J."/>
            <person name="Heisterkamp N."/>
        </authorList>
    </citation>
    <scope>INTERACTION WITH ARHGDIA</scope>
</reference>
<proteinExistence type="evidence at protein level"/>
<organism>
    <name type="scientific">Rattus norvegicus</name>
    <name type="common">Rat</name>
    <dbReference type="NCBI Taxonomy" id="10116"/>
    <lineage>
        <taxon>Eukaryota</taxon>
        <taxon>Metazoa</taxon>
        <taxon>Chordata</taxon>
        <taxon>Craniata</taxon>
        <taxon>Vertebrata</taxon>
        <taxon>Euteleostomi</taxon>
        <taxon>Mammalia</taxon>
        <taxon>Eutheria</taxon>
        <taxon>Euarchontoglires</taxon>
        <taxon>Glires</taxon>
        <taxon>Rodentia</taxon>
        <taxon>Myomorpha</taxon>
        <taxon>Muroidea</taxon>
        <taxon>Muridae</taxon>
        <taxon>Murinae</taxon>
        <taxon>Rattus</taxon>
    </lineage>
</organism>
<sequence>MGFGSDLKNSQEAVLKLQDWELRLLETVKKFMALRIKSDKEYAYTLQNLCNQVDKDSTVQVNYVSNVSKSWLLMIQQTEQLSRIMKTHAEDLNSGPLHRLTMMIKDKQQVKKSYVGIHQQIEAEMIKVTKTELEKLKSSYRQLIKEMNSAKEKYKEALAKGKETEKAKERCDKATMKLHMLHNQYVLALKGAQLHQSQYYDTTLPLLLDSVQKMQEEMIKALKGIFDEYSEITSLVTEEIVNVHKEIQMSVDQIDPSTEYNDFIDVHRTTAAKEQEIEFDTSLLEENENLQANEIMWNNLTADSLQVMLKTLAEELTQTQQMLLHKEAAVLELEKRIEESSETCAKKSDIVLLLGQKQALEELKQSVQQLRCTEAKCAAQKELLEQKVQENDGKEPPPVVNYEEDARSVTSMERKERLSKFESIRHSIAGIIKSPKSVLGSSTQLSDVISVGEKPLAEHDWYHGAIPRIEAQELLKQQGDFLVRESHGKPGEYVLSVYSDGQRRHFIIQFVDNLYRFEGTGFSNIPQLIDHHFNTKQVITKKSGVVLLNPIPKDKKWVLNHEDVSLGELLGKGNFGEVYKGTLKDKTPVAVKTCKEDLPQELKIKFLQEAKILKQYDHPNIVKLIGVCTQRQPVYIIMELVPGGDFLSFLRKRKDELKLKQLVRFSLDVAAGMLYLEGKNCIHRDLAARNCLVGENNTLKISDFGMSRQEDGGVYSSSGLKQIPIKWTAPEALNYGRYSSESDVWSFGILLWETFSLGVCPYPGMTNQQAREQVERGYRMSAPQNCPEEIFTIMMKCWDYKPENRPKFSDLHKELTAIKKKIT</sequence>
<keyword id="KW-0067">ATP-binding</keyword>
<keyword id="KW-0965">Cell junction</keyword>
<keyword id="KW-1003">Cell membrane</keyword>
<keyword id="KW-0966">Cell projection</keyword>
<keyword id="KW-0175">Coiled coil</keyword>
<keyword id="KW-0963">Cytoplasm</keyword>
<keyword id="KW-0206">Cytoskeleton</keyword>
<keyword id="KW-0418">Kinase</keyword>
<keyword id="KW-0446">Lipid-binding</keyword>
<keyword id="KW-0472">Membrane</keyword>
<keyword id="KW-0547">Nucleotide-binding</keyword>
<keyword id="KW-0539">Nucleus</keyword>
<keyword id="KW-0597">Phosphoprotein</keyword>
<keyword id="KW-1185">Reference proteome</keyword>
<keyword id="KW-0727">SH2 domain</keyword>
<keyword id="KW-0808">Transferase</keyword>
<keyword id="KW-0829">Tyrosine-protein kinase</keyword>
<keyword id="KW-0832">Ubl conjugation</keyword>